<dbReference type="EMBL" id="L29259">
    <property type="protein sequence ID" value="AAA41109.1"/>
    <property type="molecule type" value="mRNA"/>
</dbReference>
<dbReference type="EMBL" id="BC060566">
    <property type="protein sequence ID" value="AAH60566.1"/>
    <property type="molecule type" value="mRNA"/>
</dbReference>
<dbReference type="RefSeq" id="NP_001257490.1">
    <property type="nucleotide sequence ID" value="NM_001270561.2"/>
</dbReference>
<dbReference type="RefSeq" id="NP_001257491.1">
    <property type="nucleotide sequence ID" value="NM_001270562.2"/>
</dbReference>
<dbReference type="RefSeq" id="NP_001257492.1">
    <property type="nucleotide sequence ID" value="NM_001270563.2"/>
</dbReference>
<dbReference type="RefSeq" id="NP_001416969.1">
    <property type="nucleotide sequence ID" value="NM_001430040.1"/>
</dbReference>
<dbReference type="RefSeq" id="NP_001416970.1">
    <property type="nucleotide sequence ID" value="NM_001430041.1"/>
</dbReference>
<dbReference type="RefSeq" id="NP_001416971.1">
    <property type="nucleotide sequence ID" value="NM_001430042.1"/>
</dbReference>
<dbReference type="RefSeq" id="NP_072115.1">
    <property type="nucleotide sequence ID" value="NM_022593.5"/>
</dbReference>
<dbReference type="RefSeq" id="XP_006237786.1">
    <property type="nucleotide sequence ID" value="XM_006237724.3"/>
</dbReference>
<dbReference type="RefSeq" id="XP_038966639.1">
    <property type="nucleotide sequence ID" value="XM_039110711.2"/>
</dbReference>
<dbReference type="BMRB" id="P83941"/>
<dbReference type="SMR" id="P83941"/>
<dbReference type="BioGRID" id="249109">
    <property type="interactions" value="8"/>
</dbReference>
<dbReference type="CORUM" id="P83941"/>
<dbReference type="FunCoup" id="P83941">
    <property type="interactions" value="3208"/>
</dbReference>
<dbReference type="IntAct" id="P83941">
    <property type="interactions" value="5"/>
</dbReference>
<dbReference type="MINT" id="P83941"/>
<dbReference type="STRING" id="10116.ENSRNOP00000071456"/>
<dbReference type="PhosphoSitePlus" id="P83941"/>
<dbReference type="jPOST" id="P83941"/>
<dbReference type="PaxDb" id="10116-ENSRNOP00000067410"/>
<dbReference type="Ensembl" id="ENSRNOT00000090313.2">
    <property type="protein sequence ID" value="ENSRNOP00000069739.1"/>
    <property type="gene ID" value="ENSRNOG00000031730.6"/>
</dbReference>
<dbReference type="GeneID" id="64525"/>
<dbReference type="KEGG" id="rno:64525"/>
<dbReference type="UCSC" id="RGD:620658">
    <property type="organism name" value="rat"/>
</dbReference>
<dbReference type="AGR" id="RGD:620658"/>
<dbReference type="CTD" id="6921"/>
<dbReference type="RGD" id="620658">
    <property type="gene designation" value="Eloc"/>
</dbReference>
<dbReference type="eggNOG" id="KOG3473">
    <property type="taxonomic scope" value="Eukaryota"/>
</dbReference>
<dbReference type="GeneTree" id="ENSGT00390000011717"/>
<dbReference type="HOGENOM" id="CLU_130038_0_2_1"/>
<dbReference type="InParanoid" id="P83941"/>
<dbReference type="OMA" id="AMVSPII"/>
<dbReference type="OrthoDB" id="249087at2759"/>
<dbReference type="PhylomeDB" id="P83941"/>
<dbReference type="TreeFam" id="TF300233"/>
<dbReference type="Reactome" id="R-RNO-112382">
    <property type="pathway name" value="Formation of RNA Pol II elongation complex"/>
</dbReference>
<dbReference type="Reactome" id="R-RNO-1234176">
    <property type="pathway name" value="Oxygen-dependent proline hydroxylation of Hypoxia-inducible Factor Alpha"/>
</dbReference>
<dbReference type="Reactome" id="R-RNO-674695">
    <property type="pathway name" value="RNA Polymerase II Pre-transcription Events"/>
</dbReference>
<dbReference type="Reactome" id="R-RNO-6796648">
    <property type="pathway name" value="TP53 Regulates Transcription of DNA Repair Genes"/>
</dbReference>
<dbReference type="Reactome" id="R-RNO-75955">
    <property type="pathway name" value="RNA Polymerase II Transcription Elongation"/>
</dbReference>
<dbReference type="Reactome" id="R-RNO-8951664">
    <property type="pathway name" value="Neddylation"/>
</dbReference>
<dbReference type="Reactome" id="R-RNO-9705462">
    <property type="pathway name" value="Inactivation of CSF3 (G-CSF) signaling"/>
</dbReference>
<dbReference type="Reactome" id="R-RNO-983168">
    <property type="pathway name" value="Antigen processing: Ubiquitination &amp; Proteasome degradation"/>
</dbReference>
<dbReference type="UniPathway" id="UPA00143"/>
<dbReference type="PRO" id="PR:P83941"/>
<dbReference type="Proteomes" id="UP000002494">
    <property type="component" value="Chromosome 5"/>
</dbReference>
<dbReference type="Bgee" id="ENSRNOG00000031730">
    <property type="expression patterns" value="Expressed in quadriceps femoris and 20 other cell types or tissues"/>
</dbReference>
<dbReference type="GO" id="GO:0031466">
    <property type="term" value="C:Cul5-RING ubiquitin ligase complex"/>
    <property type="evidence" value="ECO:0000250"/>
    <property type="project" value="UniProtKB"/>
</dbReference>
<dbReference type="GO" id="GO:0070449">
    <property type="term" value="C:elongin complex"/>
    <property type="evidence" value="ECO:0000266"/>
    <property type="project" value="RGD"/>
</dbReference>
<dbReference type="GO" id="GO:0030891">
    <property type="term" value="C:VCB complex"/>
    <property type="evidence" value="ECO:0000314"/>
    <property type="project" value="RGD"/>
</dbReference>
<dbReference type="GO" id="GO:0044877">
    <property type="term" value="F:protein-containing complex binding"/>
    <property type="evidence" value="ECO:0000353"/>
    <property type="project" value="RGD"/>
</dbReference>
<dbReference type="GO" id="GO:0030674">
    <property type="term" value="F:protein-macromolecule adaptor activity"/>
    <property type="evidence" value="ECO:0000318"/>
    <property type="project" value="GO_Central"/>
</dbReference>
<dbReference type="GO" id="GO:0001222">
    <property type="term" value="F:transcription corepressor binding"/>
    <property type="evidence" value="ECO:0000266"/>
    <property type="project" value="RGD"/>
</dbReference>
<dbReference type="GO" id="GO:0032968">
    <property type="term" value="P:positive regulation of transcription elongation by RNA polymerase II"/>
    <property type="evidence" value="ECO:0000314"/>
    <property type="project" value="RGD"/>
</dbReference>
<dbReference type="GO" id="GO:0016567">
    <property type="term" value="P:protein ubiquitination"/>
    <property type="evidence" value="ECO:0000250"/>
    <property type="project" value="UniProtKB"/>
</dbReference>
<dbReference type="GO" id="GO:0140958">
    <property type="term" value="P:target-directed miRNA degradation"/>
    <property type="evidence" value="ECO:0000266"/>
    <property type="project" value="RGD"/>
</dbReference>
<dbReference type="GO" id="GO:0006367">
    <property type="term" value="P:transcription initiation at RNA polymerase II promoter"/>
    <property type="evidence" value="ECO:0000266"/>
    <property type="project" value="RGD"/>
</dbReference>
<dbReference type="GO" id="GO:0006511">
    <property type="term" value="P:ubiquitin-dependent protein catabolic process"/>
    <property type="evidence" value="ECO:0000318"/>
    <property type="project" value="GO_Central"/>
</dbReference>
<dbReference type="CDD" id="cd18321">
    <property type="entry name" value="BTB_POZ_EloC"/>
    <property type="match status" value="1"/>
</dbReference>
<dbReference type="FunFam" id="3.30.710.10:FF:000016">
    <property type="entry name" value="Transcription elongation factor"/>
    <property type="match status" value="1"/>
</dbReference>
<dbReference type="Gene3D" id="3.30.710.10">
    <property type="entry name" value="Potassium Channel Kv1.1, Chain A"/>
    <property type="match status" value="1"/>
</dbReference>
<dbReference type="InterPro" id="IPR039948">
    <property type="entry name" value="ELC1"/>
</dbReference>
<dbReference type="InterPro" id="IPR001232">
    <property type="entry name" value="SKP1-like"/>
</dbReference>
<dbReference type="InterPro" id="IPR011333">
    <property type="entry name" value="SKP1/BTB/POZ_sf"/>
</dbReference>
<dbReference type="InterPro" id="IPR016073">
    <property type="entry name" value="Skp1_comp_POZ"/>
</dbReference>
<dbReference type="PANTHER" id="PTHR20648">
    <property type="entry name" value="ELONGIN-C"/>
    <property type="match status" value="1"/>
</dbReference>
<dbReference type="Pfam" id="PF03931">
    <property type="entry name" value="Skp1_POZ"/>
    <property type="match status" value="1"/>
</dbReference>
<dbReference type="SMART" id="SM00512">
    <property type="entry name" value="Skp1"/>
    <property type="match status" value="1"/>
</dbReference>
<dbReference type="SUPFAM" id="SSF54695">
    <property type="entry name" value="POZ domain"/>
    <property type="match status" value="1"/>
</dbReference>
<evidence type="ECO:0000250" key="1">
    <source>
        <dbReference type="UniProtKB" id="P83940"/>
    </source>
</evidence>
<evidence type="ECO:0000250" key="2">
    <source>
        <dbReference type="UniProtKB" id="Q15369"/>
    </source>
</evidence>
<evidence type="ECO:0000305" key="3"/>
<reference key="1">
    <citation type="journal article" date="1994" name="Proc. Natl. Acad. Sci. U.S.A.">
        <title>Molecular cloning of an essential subunit of RNA polymerase II elongation factor SIII.</title>
        <authorList>
            <person name="Garrett K.P."/>
            <person name="Tan S."/>
            <person name="Bradsher J.N."/>
            <person name="Lane W.S."/>
            <person name="Conaway J.W."/>
            <person name="Conaway R.C."/>
        </authorList>
    </citation>
    <scope>NUCLEOTIDE SEQUENCE [MRNA]</scope>
    <source>
        <strain>Sprague-Dawley</strain>
        <tissue>Brain</tissue>
        <tissue>Liver</tissue>
    </source>
</reference>
<reference key="2">
    <citation type="journal article" date="2004" name="Genome Res.">
        <title>The status, quality, and expansion of the NIH full-length cDNA project: the Mammalian Gene Collection (MGC).</title>
        <authorList>
            <consortium name="The MGC Project Team"/>
        </authorList>
    </citation>
    <scope>NUCLEOTIDE SEQUENCE [LARGE SCALE MRNA]</scope>
    <source>
        <tissue>Pituitary</tissue>
    </source>
</reference>
<reference key="3">
    <citation type="journal article" date="1999" name="Science">
        <title>Rbx1, a component of the VHL tumor suppressor complex and SCF ubiquitin ligase.</title>
        <authorList>
            <person name="Kamura T."/>
            <person name="Koepp D.M."/>
            <person name="Conrad M.N."/>
            <person name="Skowyra D."/>
            <person name="Moreland R.J."/>
            <person name="Iliopoulos O."/>
            <person name="Lane W.S."/>
            <person name="Kaelin W.G. Jr."/>
            <person name="Elledge S.J."/>
            <person name="Conaway R.C."/>
            <person name="Harper J.W."/>
            <person name="Conaway J.W."/>
        </authorList>
    </citation>
    <scope>IDENTIFICATION IN A COMPLEX WITH ELOB; VHL; CUL2 AND RBX1</scope>
</reference>
<organism>
    <name type="scientific">Rattus norvegicus</name>
    <name type="common">Rat</name>
    <dbReference type="NCBI Taxonomy" id="10116"/>
    <lineage>
        <taxon>Eukaryota</taxon>
        <taxon>Metazoa</taxon>
        <taxon>Chordata</taxon>
        <taxon>Craniata</taxon>
        <taxon>Vertebrata</taxon>
        <taxon>Euteleostomi</taxon>
        <taxon>Mammalia</taxon>
        <taxon>Eutheria</taxon>
        <taxon>Euarchontoglires</taxon>
        <taxon>Glires</taxon>
        <taxon>Rodentia</taxon>
        <taxon>Myomorpha</taxon>
        <taxon>Muroidea</taxon>
        <taxon>Muridae</taxon>
        <taxon>Murinae</taxon>
        <taxon>Rattus</taxon>
    </lineage>
</organism>
<sequence length="112" mass="12473">MDGEEKTYGGCEGPDAMYVKLISSDGHEFIVKREHALTSGTIKAMLSGPGQFAENETNEVNFREIPSHVLSKVCMYFTYKVRYTNSSTEIPEFPIAPEIALELLMAANFLDC</sequence>
<name>ELOC_RAT</name>
<accession>P83941</accession>
<accession>Q63182</accession>
<feature type="chain" id="PRO_0000187260" description="Elongin-C">
    <location>
        <begin position="1"/>
        <end position="112"/>
    </location>
</feature>
<comment type="function">
    <text evidence="1 2">SIII, also known as elongin, is a general transcription elongation factor that increases the RNA polymerase II transcription elongation past template-encoded arresting sites. Subunit A is transcriptionally active and its transcription activity is strongly enhanced by binding to the dimeric complex of the SIII regulatory subunits B and C (elongin BC complex) (By similarity). In embryonic stem cells, the elongin BC complex is recruited by EPOP to Polycomb group (PcG) target genes in order generate genomic region that display both active and repressive chromatin properties, an important feature of pluripotent stem cells (By similarity).</text>
</comment>
<comment type="function">
    <text evidence="1 2">Core component of multiple cullin-RING-based ECS (ElonginB/C-CUL2/5-SOCS-box protein) E3 ubiquitin-protein ligase complexes, which mediate the ubiquitination of target proteins. By binding to BC-box motifs it seems to link target recruitment subunits, like VHL and members of the SOCS box family, to Cullin/RBX1 modules that activate E2 ubiquitination enzymes. Component the von Hippel-Lindau ubiquitination complex CBC(VHL). A number of ECS complexes (containing either KLHDC2, KLHDC3, KLHDC10, APPBP2, FEM1A, FEM1B or FEM1C as substrate-recognition component) are part of the DesCEND (destruction via C-end degrons) pathway, which recognizes a C-degron located at the extreme C terminus of target proteins, leading to their ubiquitination and degradation. The ECS(ASB9) complex mediates ubiquitination and degradation of CKB. As part of a multisubunit ubiquitin ligase complex, polyubiquitinates monoubiquitinated POLR2A (By similarity). ECS(LRR1) ubiquitinates MCM7 and promotes CMG replisome disassembly by VCP and chromatin extraction during S-phase (By similarity). As part of the ECS(RAB40C) complex, mediates ANKRD28 ubiquitination and degradation, thereby inhibiting protein phosphatase 6 (PP6) complex activity and focal adhesion assembly during cell migration (By similarity).</text>
</comment>
<comment type="pathway">
    <text evidence="2">Protein modification; protein ubiquitination.</text>
</comment>
<comment type="subunit">
    <text evidence="1 2">Heterotrimer of an A (ELOA, ELOA2 or ELOA3P), ELOB and ELOC subunit (By similarity). The elongin BC complex interacts with EPOP; leading to recruit the elongin BC complex to Polycomb group (PcG) target genes, thereby restricting excessive activity of the PRC2/EED-EZH2 complex (By similarity). Component of multiple cullin-RING E3 ubiquitin-protein ligase complexes composed of Elongin BC (ELOB and ELOC), a cullin (CUL2 or CUL5), a catalytic subunit (RBX1 or RNF7/RBX2), as well as a substrate adapter protein that can be either ASB2, ASB9, ASB11, KLHDC2, KLHDC3, KLHDC10, APPBP2, FEM1A, FEM1B, FEM1C, LRR1, PCMTD1, SOCS1, SOCS2, SOCS5, SPSB1, SPSB3, ELOA, VHL, WSB1, ZYG11B or RAB40C. Interacts with TMF1. As part of the Elongin BC E3 ubiquitin ligase complex; interacts with NRBP1 (By similarity). May form oligomers as a KLHDC2/KLHDC3-ELOB-ELOC complex; this interaction is autoinhibitory for the E3 ligase complex as the substrate-binding site of KLHDC2/KLHDC3 is blocked in the oligomer (By similarity).</text>
</comment>
<comment type="subcellular location">
    <subcellularLocation>
        <location evidence="2">Nucleus</location>
    </subcellularLocation>
</comment>
<comment type="PTM">
    <text evidence="2">Ubiquitinated by the DCX(AMBRA1) complex, leading to its degradation by the proteasome.</text>
</comment>
<comment type="similarity">
    <text evidence="3">Belongs to the SKP1 family.</text>
</comment>
<keyword id="KW-0539">Nucleus</keyword>
<keyword id="KW-1185">Reference proteome</keyword>
<keyword id="KW-0804">Transcription</keyword>
<keyword id="KW-0805">Transcription regulation</keyword>
<keyword id="KW-0832">Ubl conjugation</keyword>
<keyword id="KW-0833">Ubl conjugation pathway</keyword>
<protein>
    <recommendedName>
        <fullName>Elongin-C</fullName>
        <shortName>EloC</shortName>
    </recommendedName>
    <alternativeName>
        <fullName>Elongin 15 kDa subunit</fullName>
    </alternativeName>
    <alternativeName>
        <fullName>RNA polymerase II transcription factor SIII subunit C</fullName>
    </alternativeName>
    <alternativeName>
        <fullName>SIII p15</fullName>
    </alternativeName>
    <alternativeName>
        <fullName>Stromal membrane-associated protein SMAP1B homolog</fullName>
    </alternativeName>
    <alternativeName>
        <fullName>Transcription elongation factor B polypeptide 1</fullName>
    </alternativeName>
</protein>
<gene>
    <name type="primary">Eloc</name>
    <name type="synonym">Tceb1</name>
</gene>
<proteinExistence type="evidence at protein level"/>